<keyword id="KW-0028">Amino-acid biosynthesis</keyword>
<keyword id="KW-0170">Cobalt</keyword>
<keyword id="KW-0220">Diaminopimelate biosynthesis</keyword>
<keyword id="KW-0378">Hydrolase</keyword>
<keyword id="KW-0457">Lysine biosynthesis</keyword>
<keyword id="KW-0479">Metal-binding</keyword>
<keyword id="KW-1185">Reference proteome</keyword>
<keyword id="KW-0862">Zinc</keyword>
<protein>
    <recommendedName>
        <fullName evidence="1">Succinyl-diaminopimelate desuccinylase</fullName>
        <shortName evidence="1">SDAP desuccinylase</shortName>
        <ecNumber evidence="1">3.5.1.18</ecNumber>
    </recommendedName>
    <alternativeName>
        <fullName evidence="1">N-succinyl-LL-2,6-diaminoheptanedioate amidohydrolase</fullName>
    </alternativeName>
</protein>
<proteinExistence type="inferred from homology"/>
<comment type="function">
    <text evidence="1">Catalyzes the hydrolysis of N-succinyl-L,L-diaminopimelic acid (SDAP), forming succinate and LL-2,6-diaminopimelate (DAP), an intermediate involved in the bacterial biosynthesis of lysine and meso-diaminopimelic acid, an essential component of bacterial cell walls.</text>
</comment>
<comment type="catalytic activity">
    <reaction evidence="1">
        <text>N-succinyl-(2S,6S)-2,6-diaminopimelate + H2O = (2S,6S)-2,6-diaminopimelate + succinate</text>
        <dbReference type="Rhea" id="RHEA:22608"/>
        <dbReference type="ChEBI" id="CHEBI:15377"/>
        <dbReference type="ChEBI" id="CHEBI:30031"/>
        <dbReference type="ChEBI" id="CHEBI:57609"/>
        <dbReference type="ChEBI" id="CHEBI:58087"/>
        <dbReference type="EC" id="3.5.1.18"/>
    </reaction>
</comment>
<comment type="cofactor">
    <cofactor evidence="1">
        <name>Zn(2+)</name>
        <dbReference type="ChEBI" id="CHEBI:29105"/>
    </cofactor>
    <cofactor evidence="1">
        <name>Co(2+)</name>
        <dbReference type="ChEBI" id="CHEBI:48828"/>
    </cofactor>
    <text evidence="1">Binds 2 Zn(2+) or Co(2+) ions per subunit.</text>
</comment>
<comment type="pathway">
    <text evidence="1">Amino-acid biosynthesis; L-lysine biosynthesis via DAP pathway; LL-2,6-diaminopimelate from (S)-tetrahydrodipicolinate (succinylase route): step 3/3.</text>
</comment>
<comment type="subunit">
    <text evidence="1">Homodimer.</text>
</comment>
<comment type="similarity">
    <text evidence="1">Belongs to the peptidase M20A family. DapE subfamily.</text>
</comment>
<dbReference type="EC" id="3.5.1.18" evidence="1"/>
<dbReference type="EMBL" id="CP000569">
    <property type="protein sequence ID" value="ABN74955.1"/>
    <property type="molecule type" value="Genomic_DNA"/>
</dbReference>
<dbReference type="RefSeq" id="WP_009874939.1">
    <property type="nucleotide sequence ID" value="NC_009053.1"/>
</dbReference>
<dbReference type="SMR" id="A3N3G9"/>
<dbReference type="STRING" id="416269.APL_1873"/>
<dbReference type="EnsemblBacteria" id="ABN74955">
    <property type="protein sequence ID" value="ABN74955"/>
    <property type="gene ID" value="APL_1873"/>
</dbReference>
<dbReference type="KEGG" id="apl:APL_1873"/>
<dbReference type="eggNOG" id="COG0624">
    <property type="taxonomic scope" value="Bacteria"/>
</dbReference>
<dbReference type="HOGENOM" id="CLU_021802_4_0_6"/>
<dbReference type="UniPathway" id="UPA00034">
    <property type="reaction ID" value="UER00021"/>
</dbReference>
<dbReference type="Proteomes" id="UP000001432">
    <property type="component" value="Chromosome"/>
</dbReference>
<dbReference type="GO" id="GO:0008777">
    <property type="term" value="F:acetylornithine deacetylase activity"/>
    <property type="evidence" value="ECO:0007669"/>
    <property type="project" value="TreeGrafter"/>
</dbReference>
<dbReference type="GO" id="GO:0050897">
    <property type="term" value="F:cobalt ion binding"/>
    <property type="evidence" value="ECO:0007669"/>
    <property type="project" value="UniProtKB-UniRule"/>
</dbReference>
<dbReference type="GO" id="GO:0009014">
    <property type="term" value="F:succinyl-diaminopimelate desuccinylase activity"/>
    <property type="evidence" value="ECO:0007669"/>
    <property type="project" value="UniProtKB-UniRule"/>
</dbReference>
<dbReference type="GO" id="GO:0008270">
    <property type="term" value="F:zinc ion binding"/>
    <property type="evidence" value="ECO:0007669"/>
    <property type="project" value="UniProtKB-UniRule"/>
</dbReference>
<dbReference type="GO" id="GO:0019877">
    <property type="term" value="P:diaminopimelate biosynthetic process"/>
    <property type="evidence" value="ECO:0007669"/>
    <property type="project" value="UniProtKB-UniRule"/>
</dbReference>
<dbReference type="GO" id="GO:0006526">
    <property type="term" value="P:L-arginine biosynthetic process"/>
    <property type="evidence" value="ECO:0007669"/>
    <property type="project" value="TreeGrafter"/>
</dbReference>
<dbReference type="GO" id="GO:0009089">
    <property type="term" value="P:lysine biosynthetic process via diaminopimelate"/>
    <property type="evidence" value="ECO:0007669"/>
    <property type="project" value="UniProtKB-UniRule"/>
</dbReference>
<dbReference type="CDD" id="cd03891">
    <property type="entry name" value="M20_DapE_proteobac"/>
    <property type="match status" value="1"/>
</dbReference>
<dbReference type="FunFam" id="3.30.70.360:FF:000011">
    <property type="entry name" value="Succinyl-diaminopimelate desuccinylase"/>
    <property type="match status" value="1"/>
</dbReference>
<dbReference type="FunFam" id="3.40.630.10:FF:000005">
    <property type="entry name" value="Succinyl-diaminopimelate desuccinylase"/>
    <property type="match status" value="1"/>
</dbReference>
<dbReference type="Gene3D" id="1.10.150.900">
    <property type="match status" value="1"/>
</dbReference>
<dbReference type="Gene3D" id="3.30.70.360">
    <property type="match status" value="1"/>
</dbReference>
<dbReference type="Gene3D" id="3.40.630.10">
    <property type="entry name" value="Zn peptidases"/>
    <property type="match status" value="1"/>
</dbReference>
<dbReference type="HAMAP" id="MF_01690">
    <property type="entry name" value="DapE"/>
    <property type="match status" value="1"/>
</dbReference>
<dbReference type="InterPro" id="IPR036264">
    <property type="entry name" value="Bact_exopeptidase_dim_dom"/>
</dbReference>
<dbReference type="InterPro" id="IPR005941">
    <property type="entry name" value="DapE_proteobac"/>
</dbReference>
<dbReference type="InterPro" id="IPR002933">
    <property type="entry name" value="Peptidase_M20"/>
</dbReference>
<dbReference type="InterPro" id="IPR011650">
    <property type="entry name" value="Peptidase_M20_dimer"/>
</dbReference>
<dbReference type="InterPro" id="IPR050072">
    <property type="entry name" value="Peptidase_M20A"/>
</dbReference>
<dbReference type="NCBIfam" id="TIGR01246">
    <property type="entry name" value="dapE_proteo"/>
    <property type="match status" value="1"/>
</dbReference>
<dbReference type="NCBIfam" id="NF009557">
    <property type="entry name" value="PRK13009.1"/>
    <property type="match status" value="1"/>
</dbReference>
<dbReference type="PANTHER" id="PTHR43808">
    <property type="entry name" value="ACETYLORNITHINE DEACETYLASE"/>
    <property type="match status" value="1"/>
</dbReference>
<dbReference type="PANTHER" id="PTHR43808:SF31">
    <property type="entry name" value="N-ACETYL-L-CITRULLINE DEACETYLASE"/>
    <property type="match status" value="1"/>
</dbReference>
<dbReference type="Pfam" id="PF07687">
    <property type="entry name" value="M20_dimer"/>
    <property type="match status" value="1"/>
</dbReference>
<dbReference type="Pfam" id="PF01546">
    <property type="entry name" value="Peptidase_M20"/>
    <property type="match status" value="1"/>
</dbReference>
<dbReference type="SUPFAM" id="SSF55031">
    <property type="entry name" value="Bacterial exopeptidase dimerisation domain"/>
    <property type="match status" value="1"/>
</dbReference>
<dbReference type="SUPFAM" id="SSF53187">
    <property type="entry name" value="Zn-dependent exopeptidases"/>
    <property type="match status" value="1"/>
</dbReference>
<reference key="1">
    <citation type="journal article" date="2008" name="J. Bacteriol.">
        <title>The complete genome sequence of Actinobacillus pleuropneumoniae L20 (serotype 5b).</title>
        <authorList>
            <person name="Foote S.J."/>
            <person name="Bosse J.T."/>
            <person name="Bouevitch A.B."/>
            <person name="Langford P.R."/>
            <person name="Young N.M."/>
            <person name="Nash J.H.E."/>
        </authorList>
    </citation>
    <scope>NUCLEOTIDE SEQUENCE [LARGE SCALE GENOMIC DNA]</scope>
    <source>
        <strain>L20</strain>
    </source>
</reference>
<gene>
    <name evidence="1" type="primary">dapE</name>
    <name type="ordered locus">APL_1873</name>
</gene>
<organism>
    <name type="scientific">Actinobacillus pleuropneumoniae serotype 5b (strain L20)</name>
    <dbReference type="NCBI Taxonomy" id="416269"/>
    <lineage>
        <taxon>Bacteria</taxon>
        <taxon>Pseudomonadati</taxon>
        <taxon>Pseudomonadota</taxon>
        <taxon>Gammaproteobacteria</taxon>
        <taxon>Pasteurellales</taxon>
        <taxon>Pasteurellaceae</taxon>
        <taxon>Actinobacillus</taxon>
    </lineage>
</organism>
<evidence type="ECO:0000255" key="1">
    <source>
        <dbReference type="HAMAP-Rule" id="MF_01690"/>
    </source>
</evidence>
<accession>A3N3G9</accession>
<feature type="chain" id="PRO_0000375450" description="Succinyl-diaminopimelate desuccinylase">
    <location>
        <begin position="1"/>
        <end position="377"/>
    </location>
</feature>
<feature type="active site" evidence="1">
    <location>
        <position position="69"/>
    </location>
</feature>
<feature type="active site" description="Proton acceptor" evidence="1">
    <location>
        <position position="134"/>
    </location>
</feature>
<feature type="binding site" evidence="1">
    <location>
        <position position="67"/>
    </location>
    <ligand>
        <name>Zn(2+)</name>
        <dbReference type="ChEBI" id="CHEBI:29105"/>
        <label>1</label>
    </ligand>
</feature>
<feature type="binding site" evidence="1">
    <location>
        <position position="100"/>
    </location>
    <ligand>
        <name>Zn(2+)</name>
        <dbReference type="ChEBI" id="CHEBI:29105"/>
        <label>1</label>
    </ligand>
</feature>
<feature type="binding site" evidence="1">
    <location>
        <position position="100"/>
    </location>
    <ligand>
        <name>Zn(2+)</name>
        <dbReference type="ChEBI" id="CHEBI:29105"/>
        <label>2</label>
    </ligand>
</feature>
<feature type="binding site" evidence="1">
    <location>
        <position position="135"/>
    </location>
    <ligand>
        <name>Zn(2+)</name>
        <dbReference type="ChEBI" id="CHEBI:29105"/>
        <label>2</label>
    </ligand>
</feature>
<feature type="binding site" evidence="1">
    <location>
        <position position="163"/>
    </location>
    <ligand>
        <name>Zn(2+)</name>
        <dbReference type="ChEBI" id="CHEBI:29105"/>
        <label>1</label>
    </ligand>
</feature>
<feature type="binding site" evidence="1">
    <location>
        <position position="349"/>
    </location>
    <ligand>
        <name>Zn(2+)</name>
        <dbReference type="ChEBI" id="CHEBI:29105"/>
        <label>2</label>
    </ligand>
</feature>
<sequence>MKHNIINLAQDLIRRPSVSPDDQGCQQVIAERLAQLGFTLEWLPFGDTLNLWATHGTQDPCVVFAGHTDVVPVGDETQWQYPPFSAEIVDGTLYGRGAADMKGSLAALVIAAETFVKNNPNHKGKIALLITSDEEAAAKAGTVKVVETLMARQEAVHYAVVGEPSSGKVLGDVIKNGRRGSITGELYIEGVQGHVAYPHLAENPVHTSLNFLTELTTYQWDNGNEFFPPTSLQIANIKAGTGSNNVIPGELYVQFNLRYCTEVTDEIIKNKVAEMLAKHQLKHRISWNLSGQPFLAGNGELVKATVQAVENVTKITPRLDTSGGTSDGRFIALMGAEVVEFGPLNATIHKVNECVSVEDLGKCGEVYYHILERLLKS</sequence>
<name>DAPE_ACTP2</name>